<proteinExistence type="inferred from homology"/>
<reference key="1">
    <citation type="journal article" date="2006" name="Proc. Natl. Acad. Sci. U.S.A.">
        <title>Genome sequence of Synechococcus CC9311: insights into adaptation to a coastal environment.</title>
        <authorList>
            <person name="Palenik B."/>
            <person name="Ren Q."/>
            <person name="Dupont C.L."/>
            <person name="Myers G.S."/>
            <person name="Heidelberg J.F."/>
            <person name="Badger J.H."/>
            <person name="Madupu R."/>
            <person name="Nelson W.C."/>
            <person name="Brinkac L.M."/>
            <person name="Dodson R.J."/>
            <person name="Durkin A.S."/>
            <person name="Daugherty S.C."/>
            <person name="Sullivan S.A."/>
            <person name="Khouri H."/>
            <person name="Mohamoud Y."/>
            <person name="Halpin R."/>
            <person name="Paulsen I.T."/>
        </authorList>
    </citation>
    <scope>NUCLEOTIDE SEQUENCE [LARGE SCALE GENOMIC DNA]</scope>
    <source>
        <strain>CC9311</strain>
    </source>
</reference>
<dbReference type="EC" id="2.7.4.22" evidence="1"/>
<dbReference type="EMBL" id="CP000435">
    <property type="protein sequence ID" value="ABI47214.1"/>
    <property type="molecule type" value="Genomic_DNA"/>
</dbReference>
<dbReference type="RefSeq" id="WP_011619919.1">
    <property type="nucleotide sequence ID" value="NC_008319.1"/>
</dbReference>
<dbReference type="SMR" id="Q0I8L5"/>
<dbReference type="STRING" id="64471.sync_2004"/>
<dbReference type="KEGG" id="syg:sync_2004"/>
<dbReference type="eggNOG" id="COG0528">
    <property type="taxonomic scope" value="Bacteria"/>
</dbReference>
<dbReference type="HOGENOM" id="CLU_033861_0_0_3"/>
<dbReference type="OrthoDB" id="9807458at2"/>
<dbReference type="UniPathway" id="UPA00159">
    <property type="reaction ID" value="UER00275"/>
</dbReference>
<dbReference type="Proteomes" id="UP000001961">
    <property type="component" value="Chromosome"/>
</dbReference>
<dbReference type="GO" id="GO:0005737">
    <property type="term" value="C:cytoplasm"/>
    <property type="evidence" value="ECO:0007669"/>
    <property type="project" value="UniProtKB-SubCell"/>
</dbReference>
<dbReference type="GO" id="GO:0005524">
    <property type="term" value="F:ATP binding"/>
    <property type="evidence" value="ECO:0007669"/>
    <property type="project" value="UniProtKB-KW"/>
</dbReference>
<dbReference type="GO" id="GO:0033862">
    <property type="term" value="F:UMP kinase activity"/>
    <property type="evidence" value="ECO:0007669"/>
    <property type="project" value="UniProtKB-EC"/>
</dbReference>
<dbReference type="GO" id="GO:0044210">
    <property type="term" value="P:'de novo' CTP biosynthetic process"/>
    <property type="evidence" value="ECO:0007669"/>
    <property type="project" value="UniProtKB-UniRule"/>
</dbReference>
<dbReference type="GO" id="GO:0006225">
    <property type="term" value="P:UDP biosynthetic process"/>
    <property type="evidence" value="ECO:0007669"/>
    <property type="project" value="TreeGrafter"/>
</dbReference>
<dbReference type="CDD" id="cd04254">
    <property type="entry name" value="AAK_UMPK-PyrH-Ec"/>
    <property type="match status" value="1"/>
</dbReference>
<dbReference type="FunFam" id="3.40.1160.10:FF:000001">
    <property type="entry name" value="Uridylate kinase"/>
    <property type="match status" value="1"/>
</dbReference>
<dbReference type="Gene3D" id="3.40.1160.10">
    <property type="entry name" value="Acetylglutamate kinase-like"/>
    <property type="match status" value="1"/>
</dbReference>
<dbReference type="HAMAP" id="MF_01220_B">
    <property type="entry name" value="PyrH_B"/>
    <property type="match status" value="1"/>
</dbReference>
<dbReference type="InterPro" id="IPR036393">
    <property type="entry name" value="AceGlu_kinase-like_sf"/>
</dbReference>
<dbReference type="InterPro" id="IPR001048">
    <property type="entry name" value="Asp/Glu/Uridylate_kinase"/>
</dbReference>
<dbReference type="InterPro" id="IPR011817">
    <property type="entry name" value="Uridylate_kinase"/>
</dbReference>
<dbReference type="InterPro" id="IPR015963">
    <property type="entry name" value="Uridylate_kinase_bac"/>
</dbReference>
<dbReference type="NCBIfam" id="TIGR02075">
    <property type="entry name" value="pyrH_bact"/>
    <property type="match status" value="1"/>
</dbReference>
<dbReference type="PANTHER" id="PTHR42833">
    <property type="entry name" value="URIDYLATE KINASE"/>
    <property type="match status" value="1"/>
</dbReference>
<dbReference type="PANTHER" id="PTHR42833:SF4">
    <property type="entry name" value="URIDYLATE KINASE PUMPKIN, CHLOROPLASTIC"/>
    <property type="match status" value="1"/>
</dbReference>
<dbReference type="Pfam" id="PF00696">
    <property type="entry name" value="AA_kinase"/>
    <property type="match status" value="1"/>
</dbReference>
<dbReference type="PIRSF" id="PIRSF005650">
    <property type="entry name" value="Uridylate_kin"/>
    <property type="match status" value="1"/>
</dbReference>
<dbReference type="SUPFAM" id="SSF53633">
    <property type="entry name" value="Carbamate kinase-like"/>
    <property type="match status" value="1"/>
</dbReference>
<gene>
    <name evidence="1" type="primary">pyrH</name>
    <name type="ordered locus">sync_2004</name>
</gene>
<feature type="chain" id="PRO_0000323963" description="Uridylate kinase">
    <location>
        <begin position="1"/>
        <end position="235"/>
    </location>
</feature>
<feature type="region of interest" description="Involved in allosteric activation by GTP" evidence="1">
    <location>
        <begin position="17"/>
        <end position="22"/>
    </location>
</feature>
<feature type="binding site" evidence="1">
    <location>
        <begin position="9"/>
        <end position="12"/>
    </location>
    <ligand>
        <name>ATP</name>
        <dbReference type="ChEBI" id="CHEBI:30616"/>
    </ligand>
</feature>
<feature type="binding site" evidence="1">
    <location>
        <position position="51"/>
    </location>
    <ligand>
        <name>UMP</name>
        <dbReference type="ChEBI" id="CHEBI:57865"/>
    </ligand>
</feature>
<feature type="binding site" evidence="1">
    <location>
        <position position="52"/>
    </location>
    <ligand>
        <name>ATP</name>
        <dbReference type="ChEBI" id="CHEBI:30616"/>
    </ligand>
</feature>
<feature type="binding site" evidence="1">
    <location>
        <position position="56"/>
    </location>
    <ligand>
        <name>ATP</name>
        <dbReference type="ChEBI" id="CHEBI:30616"/>
    </ligand>
</feature>
<feature type="binding site" evidence="1">
    <location>
        <position position="71"/>
    </location>
    <ligand>
        <name>UMP</name>
        <dbReference type="ChEBI" id="CHEBI:57865"/>
    </ligand>
</feature>
<feature type="binding site" evidence="1">
    <location>
        <begin position="132"/>
        <end position="139"/>
    </location>
    <ligand>
        <name>UMP</name>
        <dbReference type="ChEBI" id="CHEBI:57865"/>
    </ligand>
</feature>
<feature type="binding site" evidence="1">
    <location>
        <position position="159"/>
    </location>
    <ligand>
        <name>ATP</name>
        <dbReference type="ChEBI" id="CHEBI:30616"/>
    </ligand>
</feature>
<feature type="binding site" evidence="1">
    <location>
        <position position="165"/>
    </location>
    <ligand>
        <name>ATP</name>
        <dbReference type="ChEBI" id="CHEBI:30616"/>
    </ligand>
</feature>
<feature type="binding site" evidence="1">
    <location>
        <position position="168"/>
    </location>
    <ligand>
        <name>ATP</name>
        <dbReference type="ChEBI" id="CHEBI:30616"/>
    </ligand>
</feature>
<organism>
    <name type="scientific">Synechococcus sp. (strain CC9311)</name>
    <dbReference type="NCBI Taxonomy" id="64471"/>
    <lineage>
        <taxon>Bacteria</taxon>
        <taxon>Bacillati</taxon>
        <taxon>Cyanobacteriota</taxon>
        <taxon>Cyanophyceae</taxon>
        <taxon>Synechococcales</taxon>
        <taxon>Synechococcaceae</taxon>
        <taxon>Synechococcus</taxon>
    </lineage>
</organism>
<protein>
    <recommendedName>
        <fullName evidence="1">Uridylate kinase</fullName>
        <shortName evidence="1">UK</shortName>
        <ecNumber evidence="1">2.7.4.22</ecNumber>
    </recommendedName>
    <alternativeName>
        <fullName evidence="1">Uridine monophosphate kinase</fullName>
        <shortName evidence="1">UMP kinase</shortName>
        <shortName evidence="1">UMPK</shortName>
    </alternativeName>
</protein>
<keyword id="KW-0021">Allosteric enzyme</keyword>
<keyword id="KW-0067">ATP-binding</keyword>
<keyword id="KW-0963">Cytoplasm</keyword>
<keyword id="KW-0418">Kinase</keyword>
<keyword id="KW-0547">Nucleotide-binding</keyword>
<keyword id="KW-0665">Pyrimidine biosynthesis</keyword>
<keyword id="KW-1185">Reference proteome</keyword>
<keyword id="KW-0808">Transferase</keyword>
<comment type="function">
    <text evidence="1">Catalyzes the reversible phosphorylation of UMP to UDP.</text>
</comment>
<comment type="catalytic activity">
    <reaction evidence="1">
        <text>UMP + ATP = UDP + ADP</text>
        <dbReference type="Rhea" id="RHEA:24400"/>
        <dbReference type="ChEBI" id="CHEBI:30616"/>
        <dbReference type="ChEBI" id="CHEBI:57865"/>
        <dbReference type="ChEBI" id="CHEBI:58223"/>
        <dbReference type="ChEBI" id="CHEBI:456216"/>
        <dbReference type="EC" id="2.7.4.22"/>
    </reaction>
</comment>
<comment type="activity regulation">
    <text evidence="1">Allosterically activated by GTP. Inhibited by UTP.</text>
</comment>
<comment type="pathway">
    <text evidence="1">Pyrimidine metabolism; CTP biosynthesis via de novo pathway; UDP from UMP (UMPK route): step 1/1.</text>
</comment>
<comment type="subunit">
    <text evidence="1">Homohexamer.</text>
</comment>
<comment type="subcellular location">
    <subcellularLocation>
        <location evidence="1">Cytoplasm</location>
    </subcellularLocation>
</comment>
<comment type="similarity">
    <text evidence="1">Belongs to the UMP kinase family.</text>
</comment>
<accession>Q0I8L5</accession>
<sequence>MAYARALLKLSGEALMGNQGYGIDPEIVQAIARDVAEVVATGTQLAIVVGGGNIFRGLKGSAAGMDRATADYVGMLATVMNAITLQDGLERAGIPTRVQTAIEMQEVAEPYIRRRAMRHLEKGRVVVFGAGCGNPFFTTDTTAALRAAEISADVVFKATKVDGVYDKDPHQFPDAVRYDSLTFQQVLSGELAVMDSTAIALCKDNNIPIVVFNLFEPGNIGKAVAGEPIGSRISN</sequence>
<name>PYRH_SYNS3</name>
<evidence type="ECO:0000255" key="1">
    <source>
        <dbReference type="HAMAP-Rule" id="MF_01220"/>
    </source>
</evidence>